<comment type="function">
    <text evidence="1">Catalyzes the methylthiolation of N6-(dimethylallyl)adenosine (i(6)A), leading to the formation of 2-methylthio-N6-(dimethylallyl)adenosine (ms(2)i(6)A) at position 37 in tRNAs that read codons beginning with uridine.</text>
</comment>
<comment type="catalytic activity">
    <reaction evidence="1">
        <text>N(6)-dimethylallyladenosine(37) in tRNA + (sulfur carrier)-SH + AH2 + 2 S-adenosyl-L-methionine = 2-methylsulfanyl-N(6)-dimethylallyladenosine(37) in tRNA + (sulfur carrier)-H + 5'-deoxyadenosine + L-methionine + A + S-adenosyl-L-homocysteine + 2 H(+)</text>
        <dbReference type="Rhea" id="RHEA:37067"/>
        <dbReference type="Rhea" id="RHEA-COMP:10375"/>
        <dbReference type="Rhea" id="RHEA-COMP:10376"/>
        <dbReference type="Rhea" id="RHEA-COMP:14737"/>
        <dbReference type="Rhea" id="RHEA-COMP:14739"/>
        <dbReference type="ChEBI" id="CHEBI:13193"/>
        <dbReference type="ChEBI" id="CHEBI:15378"/>
        <dbReference type="ChEBI" id="CHEBI:17319"/>
        <dbReference type="ChEBI" id="CHEBI:17499"/>
        <dbReference type="ChEBI" id="CHEBI:29917"/>
        <dbReference type="ChEBI" id="CHEBI:57844"/>
        <dbReference type="ChEBI" id="CHEBI:57856"/>
        <dbReference type="ChEBI" id="CHEBI:59789"/>
        <dbReference type="ChEBI" id="CHEBI:64428"/>
        <dbReference type="ChEBI" id="CHEBI:74415"/>
        <dbReference type="ChEBI" id="CHEBI:74417"/>
        <dbReference type="EC" id="2.8.4.3"/>
    </reaction>
</comment>
<comment type="cofactor">
    <cofactor evidence="1">
        <name>[4Fe-4S] cluster</name>
        <dbReference type="ChEBI" id="CHEBI:49883"/>
    </cofactor>
    <text evidence="1">Binds 2 [4Fe-4S] clusters. One cluster is coordinated with 3 cysteines and an exchangeable S-adenosyl-L-methionine.</text>
</comment>
<comment type="subunit">
    <text evidence="1">Monomer.</text>
</comment>
<comment type="subcellular location">
    <subcellularLocation>
        <location evidence="1">Cytoplasm</location>
    </subcellularLocation>
</comment>
<comment type="similarity">
    <text evidence="1">Belongs to the methylthiotransferase family. MiaB subfamily.</text>
</comment>
<proteinExistence type="inferred from homology"/>
<feature type="chain" id="PRO_0000374448" description="tRNA-2-methylthio-N(6)-dimethylallyladenosine synthase">
    <location>
        <begin position="1"/>
        <end position="480"/>
    </location>
</feature>
<feature type="domain" description="MTTase N-terminal" evidence="1">
    <location>
        <begin position="29"/>
        <end position="145"/>
    </location>
</feature>
<feature type="domain" description="Radical SAM core" evidence="2">
    <location>
        <begin position="166"/>
        <end position="403"/>
    </location>
</feature>
<feature type="domain" description="TRAM" evidence="1">
    <location>
        <begin position="406"/>
        <end position="474"/>
    </location>
</feature>
<feature type="binding site" evidence="1">
    <location>
        <position position="38"/>
    </location>
    <ligand>
        <name>[4Fe-4S] cluster</name>
        <dbReference type="ChEBI" id="CHEBI:49883"/>
        <label>1</label>
    </ligand>
</feature>
<feature type="binding site" evidence="1">
    <location>
        <position position="74"/>
    </location>
    <ligand>
        <name>[4Fe-4S] cluster</name>
        <dbReference type="ChEBI" id="CHEBI:49883"/>
        <label>1</label>
    </ligand>
</feature>
<feature type="binding site" evidence="1">
    <location>
        <position position="108"/>
    </location>
    <ligand>
        <name>[4Fe-4S] cluster</name>
        <dbReference type="ChEBI" id="CHEBI:49883"/>
        <label>1</label>
    </ligand>
</feature>
<feature type="binding site" evidence="1">
    <location>
        <position position="180"/>
    </location>
    <ligand>
        <name>[4Fe-4S] cluster</name>
        <dbReference type="ChEBI" id="CHEBI:49883"/>
        <label>2</label>
        <note>4Fe-4S-S-AdoMet</note>
    </ligand>
</feature>
<feature type="binding site" evidence="1">
    <location>
        <position position="184"/>
    </location>
    <ligand>
        <name>[4Fe-4S] cluster</name>
        <dbReference type="ChEBI" id="CHEBI:49883"/>
        <label>2</label>
        <note>4Fe-4S-S-AdoMet</note>
    </ligand>
</feature>
<feature type="binding site" evidence="1">
    <location>
        <position position="187"/>
    </location>
    <ligand>
        <name>[4Fe-4S] cluster</name>
        <dbReference type="ChEBI" id="CHEBI:49883"/>
        <label>2</label>
        <note>4Fe-4S-S-AdoMet</note>
    </ligand>
</feature>
<reference key="1">
    <citation type="journal article" date="2007" name="PLoS Genet.">
        <title>Patterns and implications of gene gain and loss in the evolution of Prochlorococcus.</title>
        <authorList>
            <person name="Kettler G.C."/>
            <person name="Martiny A.C."/>
            <person name="Huang K."/>
            <person name="Zucker J."/>
            <person name="Coleman M.L."/>
            <person name="Rodrigue S."/>
            <person name="Chen F."/>
            <person name="Lapidus A."/>
            <person name="Ferriera S."/>
            <person name="Johnson J."/>
            <person name="Steglich C."/>
            <person name="Church G.M."/>
            <person name="Richardson P."/>
            <person name="Chisholm S.W."/>
        </authorList>
    </citation>
    <scope>NUCLEOTIDE SEQUENCE [LARGE SCALE GENOMIC DNA]</scope>
    <source>
        <strain>MIT 9303</strain>
    </source>
</reference>
<keyword id="KW-0004">4Fe-4S</keyword>
<keyword id="KW-0963">Cytoplasm</keyword>
<keyword id="KW-0408">Iron</keyword>
<keyword id="KW-0411">Iron-sulfur</keyword>
<keyword id="KW-0479">Metal-binding</keyword>
<keyword id="KW-0949">S-adenosyl-L-methionine</keyword>
<keyword id="KW-0808">Transferase</keyword>
<keyword id="KW-0819">tRNA processing</keyword>
<dbReference type="EC" id="2.8.4.3" evidence="1"/>
<dbReference type="EMBL" id="CP000554">
    <property type="protein sequence ID" value="ABM78734.1"/>
    <property type="molecule type" value="Genomic_DNA"/>
</dbReference>
<dbReference type="RefSeq" id="WP_011826615.1">
    <property type="nucleotide sequence ID" value="NC_008820.1"/>
</dbReference>
<dbReference type="SMR" id="A2CB74"/>
<dbReference type="STRING" id="59922.P9303_19921"/>
<dbReference type="KEGG" id="pmf:P9303_19921"/>
<dbReference type="HOGENOM" id="CLU_018697_2_2_3"/>
<dbReference type="BioCyc" id="PMAR59922:G1G80-1733-MONOMER"/>
<dbReference type="Proteomes" id="UP000002274">
    <property type="component" value="Chromosome"/>
</dbReference>
<dbReference type="GO" id="GO:0005737">
    <property type="term" value="C:cytoplasm"/>
    <property type="evidence" value="ECO:0007669"/>
    <property type="project" value="UniProtKB-SubCell"/>
</dbReference>
<dbReference type="GO" id="GO:0051539">
    <property type="term" value="F:4 iron, 4 sulfur cluster binding"/>
    <property type="evidence" value="ECO:0007669"/>
    <property type="project" value="UniProtKB-UniRule"/>
</dbReference>
<dbReference type="GO" id="GO:0046872">
    <property type="term" value="F:metal ion binding"/>
    <property type="evidence" value="ECO:0007669"/>
    <property type="project" value="UniProtKB-KW"/>
</dbReference>
<dbReference type="GO" id="GO:0035596">
    <property type="term" value="F:methylthiotransferase activity"/>
    <property type="evidence" value="ECO:0007669"/>
    <property type="project" value="InterPro"/>
</dbReference>
<dbReference type="GO" id="GO:0035600">
    <property type="term" value="P:tRNA methylthiolation"/>
    <property type="evidence" value="ECO:0007669"/>
    <property type="project" value="TreeGrafter"/>
</dbReference>
<dbReference type="CDD" id="cd01335">
    <property type="entry name" value="Radical_SAM"/>
    <property type="match status" value="1"/>
</dbReference>
<dbReference type="FunFam" id="3.40.50.12160:FF:000006">
    <property type="entry name" value="tRNA-2-methylthio-N(6)-dimethylallyladenosine synthase"/>
    <property type="match status" value="1"/>
</dbReference>
<dbReference type="FunFam" id="3.80.30.20:FF:000001">
    <property type="entry name" value="tRNA-2-methylthio-N(6)-dimethylallyladenosine synthase 2"/>
    <property type="match status" value="1"/>
</dbReference>
<dbReference type="Gene3D" id="3.40.50.12160">
    <property type="entry name" value="Methylthiotransferase, N-terminal domain"/>
    <property type="match status" value="1"/>
</dbReference>
<dbReference type="Gene3D" id="3.80.30.20">
    <property type="entry name" value="tm_1862 like domain"/>
    <property type="match status" value="1"/>
</dbReference>
<dbReference type="HAMAP" id="MF_01864">
    <property type="entry name" value="tRNA_metthiotr_MiaB"/>
    <property type="match status" value="1"/>
</dbReference>
<dbReference type="InterPro" id="IPR006638">
    <property type="entry name" value="Elp3/MiaA/NifB-like_rSAM"/>
</dbReference>
<dbReference type="InterPro" id="IPR005839">
    <property type="entry name" value="Methylthiotransferase"/>
</dbReference>
<dbReference type="InterPro" id="IPR020612">
    <property type="entry name" value="Methylthiotransferase_CS"/>
</dbReference>
<dbReference type="InterPro" id="IPR013848">
    <property type="entry name" value="Methylthiotransferase_N"/>
</dbReference>
<dbReference type="InterPro" id="IPR038135">
    <property type="entry name" value="Methylthiotransferase_N_sf"/>
</dbReference>
<dbReference type="InterPro" id="IPR006463">
    <property type="entry name" value="MiaB_methiolase"/>
</dbReference>
<dbReference type="InterPro" id="IPR007197">
    <property type="entry name" value="rSAM"/>
</dbReference>
<dbReference type="InterPro" id="IPR023404">
    <property type="entry name" value="rSAM_horseshoe"/>
</dbReference>
<dbReference type="InterPro" id="IPR002792">
    <property type="entry name" value="TRAM_dom"/>
</dbReference>
<dbReference type="NCBIfam" id="TIGR01574">
    <property type="entry name" value="miaB-methiolase"/>
    <property type="match status" value="1"/>
</dbReference>
<dbReference type="NCBIfam" id="TIGR00089">
    <property type="entry name" value="MiaB/RimO family radical SAM methylthiotransferase"/>
    <property type="match status" value="1"/>
</dbReference>
<dbReference type="PANTHER" id="PTHR43020">
    <property type="entry name" value="CDK5 REGULATORY SUBUNIT-ASSOCIATED PROTEIN 1"/>
    <property type="match status" value="1"/>
</dbReference>
<dbReference type="PANTHER" id="PTHR43020:SF2">
    <property type="entry name" value="MITOCHONDRIAL TRNA METHYLTHIOTRANSFERASE CDK5RAP1"/>
    <property type="match status" value="1"/>
</dbReference>
<dbReference type="Pfam" id="PF04055">
    <property type="entry name" value="Radical_SAM"/>
    <property type="match status" value="1"/>
</dbReference>
<dbReference type="Pfam" id="PF01938">
    <property type="entry name" value="TRAM"/>
    <property type="match status" value="1"/>
</dbReference>
<dbReference type="Pfam" id="PF00919">
    <property type="entry name" value="UPF0004"/>
    <property type="match status" value="1"/>
</dbReference>
<dbReference type="SFLD" id="SFLDF00273">
    <property type="entry name" value="(dimethylallyl)adenosine_tRNA"/>
    <property type="match status" value="1"/>
</dbReference>
<dbReference type="SFLD" id="SFLDG01082">
    <property type="entry name" value="B12-binding_domain_containing"/>
    <property type="match status" value="1"/>
</dbReference>
<dbReference type="SFLD" id="SFLDS00029">
    <property type="entry name" value="Radical_SAM"/>
    <property type="match status" value="1"/>
</dbReference>
<dbReference type="SMART" id="SM00729">
    <property type="entry name" value="Elp3"/>
    <property type="match status" value="1"/>
</dbReference>
<dbReference type="SUPFAM" id="SSF102114">
    <property type="entry name" value="Radical SAM enzymes"/>
    <property type="match status" value="1"/>
</dbReference>
<dbReference type="PROSITE" id="PS51449">
    <property type="entry name" value="MTTASE_N"/>
    <property type="match status" value="1"/>
</dbReference>
<dbReference type="PROSITE" id="PS01278">
    <property type="entry name" value="MTTASE_RADICAL"/>
    <property type="match status" value="1"/>
</dbReference>
<dbReference type="PROSITE" id="PS51918">
    <property type="entry name" value="RADICAL_SAM"/>
    <property type="match status" value="1"/>
</dbReference>
<dbReference type="PROSITE" id="PS50926">
    <property type="entry name" value="TRAM"/>
    <property type="match status" value="1"/>
</dbReference>
<gene>
    <name evidence="1" type="primary">miaB</name>
    <name type="ordered locus">P9303_19921</name>
</gene>
<protein>
    <recommendedName>
        <fullName evidence="1">tRNA-2-methylthio-N(6)-dimethylallyladenosine synthase</fullName>
        <ecNumber evidence="1">2.8.4.3</ecNumber>
    </recommendedName>
    <alternativeName>
        <fullName evidence="1">(Dimethylallyl)adenosine tRNA methylthiotransferase MiaB</fullName>
    </alternativeName>
    <alternativeName>
        <fullName evidence="1">tRNA-i(6)A37 methylthiotransferase</fullName>
    </alternativeName>
</protein>
<evidence type="ECO:0000255" key="1">
    <source>
        <dbReference type="HAMAP-Rule" id="MF_01864"/>
    </source>
</evidence>
<evidence type="ECO:0000255" key="2">
    <source>
        <dbReference type="PROSITE-ProRule" id="PRU01266"/>
    </source>
</evidence>
<sequence>MFRSFASPLALVATSALATNPATTAQHQGSFWIQTFGCQMNKADSERMAGILEAMGYHEAPAELEADLVLYNTCTIRDNAEQKVYSYLGRQARRKRTHPHLKLVVAGCVAQQEGEALLRRIPELDLVMGPQHANRLEALLTQVDNGQQVVATDDNHILEDLTTARRDSTICAWVNVIYGCNERCTYCVVPSVRGKEQSRSPEAIRLEIEGLAARGFREITLLGQNIDAYGRDLPGITPEGRRQNTLTDLLHHIHDVEGIERIRFATSHPRYFTERLIEACFDLPKVCEHFHIPFQSGDNDVLKAMARGYTVERYRRIVNRIRELMPDAAISTDVIVAFPGETDAQFQNTLNLVEEVGFDQVNTAAYSPRPNTPAATWSNQLPEVVKVERLKQLNALVERVALQRNSRYSGKVEQVLAEGINPKKPQQLMGRTRTNRLTFFAAEGPQSCRYSPGDLVDVQINSVRAFSLSGTPCDQTRSRH</sequence>
<name>MIAB_PROM3</name>
<accession>A2CB74</accession>
<organism>
    <name type="scientific">Prochlorococcus marinus (strain MIT 9303)</name>
    <dbReference type="NCBI Taxonomy" id="59922"/>
    <lineage>
        <taxon>Bacteria</taxon>
        <taxon>Bacillati</taxon>
        <taxon>Cyanobacteriota</taxon>
        <taxon>Cyanophyceae</taxon>
        <taxon>Synechococcales</taxon>
        <taxon>Prochlorococcaceae</taxon>
        <taxon>Prochlorococcus</taxon>
    </lineage>
</organism>